<keyword id="KW-0007">Acetylation</keyword>
<keyword id="KW-0143">Chaperone</keyword>
<keyword id="KW-0903">Direct protein sequencing</keyword>
<keyword id="KW-0256">Endoplasmic reticulum</keyword>
<keyword id="KW-0325">Glycoprotein</keyword>
<keyword id="KW-0597">Phosphoprotein</keyword>
<keyword id="KW-1185">Reference proteome</keyword>
<keyword id="KW-0732">Signal</keyword>
<keyword id="KW-0346">Stress response</keyword>
<evidence type="ECO:0000250" key="1"/>
<evidence type="ECO:0000250" key="2">
    <source>
        <dbReference type="UniProtKB" id="P50454"/>
    </source>
</evidence>
<evidence type="ECO:0000255" key="3"/>
<evidence type="ECO:0000269" key="4">
    <source>
    </source>
</evidence>
<evidence type="ECO:0000305" key="5"/>
<evidence type="ECO:0007744" key="6">
    <source>
    </source>
</evidence>
<dbReference type="EMBL" id="X60676">
    <property type="protein sequence ID" value="CAA43091.1"/>
    <property type="molecule type" value="mRNA"/>
</dbReference>
<dbReference type="EMBL" id="J05609">
    <property type="protein sequence ID" value="AAA03200.1"/>
    <property type="status" value="ALT_SEQ"/>
    <property type="molecule type" value="mRNA"/>
</dbReference>
<dbReference type="EMBL" id="D12907">
    <property type="protein sequence ID" value="BAA02298.1"/>
    <property type="molecule type" value="Genomic_DNA"/>
</dbReference>
<dbReference type="EMBL" id="AK029080">
    <property type="protein sequence ID" value="BAC26283.1"/>
    <property type="molecule type" value="mRNA"/>
</dbReference>
<dbReference type="EMBL" id="AK031457">
    <property type="protein sequence ID" value="BAC27413.1"/>
    <property type="molecule type" value="mRNA"/>
</dbReference>
<dbReference type="EMBL" id="AK077660">
    <property type="protein sequence ID" value="BAC36935.1"/>
    <property type="molecule type" value="mRNA"/>
</dbReference>
<dbReference type="EMBL" id="AK077937">
    <property type="protein sequence ID" value="BAC37075.1"/>
    <property type="molecule type" value="mRNA"/>
</dbReference>
<dbReference type="EMBL" id="AK086519">
    <property type="protein sequence ID" value="BAC39683.1"/>
    <property type="molecule type" value="mRNA"/>
</dbReference>
<dbReference type="EMBL" id="AK086523">
    <property type="protein sequence ID" value="BAC39684.1"/>
    <property type="molecule type" value="mRNA"/>
</dbReference>
<dbReference type="EMBL" id="AK089993">
    <property type="protein sequence ID" value="BAC41032.1"/>
    <property type="molecule type" value="mRNA"/>
</dbReference>
<dbReference type="EMBL" id="AK090103">
    <property type="protein sequence ID" value="BAC41093.1"/>
    <property type="molecule type" value="mRNA"/>
</dbReference>
<dbReference type="EMBL" id="AK159998">
    <property type="protein sequence ID" value="BAE35546.1"/>
    <property type="molecule type" value="mRNA"/>
</dbReference>
<dbReference type="EMBL" id="AK168442">
    <property type="protein sequence ID" value="BAE40347.1"/>
    <property type="molecule type" value="mRNA"/>
</dbReference>
<dbReference type="EMBL" id="AK168870">
    <property type="protein sequence ID" value="BAE40689.1"/>
    <property type="molecule type" value="mRNA"/>
</dbReference>
<dbReference type="EMBL" id="AC158748">
    <property type="status" value="NOT_ANNOTATED_CDS"/>
    <property type="molecule type" value="Genomic_DNA"/>
</dbReference>
<dbReference type="EMBL" id="BC085143">
    <property type="protein sequence ID" value="AAH85143.1"/>
    <property type="molecule type" value="mRNA"/>
</dbReference>
<dbReference type="CCDS" id="CCDS21480.1"/>
<dbReference type="PIR" id="S23453">
    <property type="entry name" value="A42843"/>
</dbReference>
<dbReference type="RefSeq" id="NP_001104513.1">
    <property type="nucleotide sequence ID" value="NM_001111043.2"/>
</dbReference>
<dbReference type="RefSeq" id="NP_001104514.1">
    <property type="nucleotide sequence ID" value="NM_001111044.2"/>
</dbReference>
<dbReference type="RefSeq" id="NP_001272705.1">
    <property type="nucleotide sequence ID" value="NM_001285776.2"/>
</dbReference>
<dbReference type="RefSeq" id="NP_001399146.1">
    <property type="nucleotide sequence ID" value="NM_001412217.1"/>
</dbReference>
<dbReference type="RefSeq" id="NP_001399147.1">
    <property type="nucleotide sequence ID" value="NM_001412218.1"/>
</dbReference>
<dbReference type="RefSeq" id="NP_001399148.1">
    <property type="nucleotide sequence ID" value="NM_001412219.1"/>
</dbReference>
<dbReference type="RefSeq" id="NP_001399149.1">
    <property type="nucleotide sequence ID" value="NM_001412220.1"/>
</dbReference>
<dbReference type="RefSeq" id="NP_001399150.1">
    <property type="nucleotide sequence ID" value="NM_001412221.1"/>
</dbReference>
<dbReference type="RefSeq" id="NP_001399151.1">
    <property type="nucleotide sequence ID" value="NM_001412222.1"/>
</dbReference>
<dbReference type="RefSeq" id="NP_033955.2">
    <property type="nucleotide sequence ID" value="NM_009825.3"/>
</dbReference>
<dbReference type="RefSeq" id="XP_006507341.1">
    <property type="nucleotide sequence ID" value="XM_006507278.3"/>
</dbReference>
<dbReference type="RefSeq" id="XP_006507342.1">
    <property type="nucleotide sequence ID" value="XM_006507279.3"/>
</dbReference>
<dbReference type="SMR" id="P19324"/>
<dbReference type="BioGRID" id="198530">
    <property type="interactions" value="18"/>
</dbReference>
<dbReference type="CORUM" id="P19324"/>
<dbReference type="FunCoup" id="P19324">
    <property type="interactions" value="975"/>
</dbReference>
<dbReference type="IntAct" id="P19324">
    <property type="interactions" value="2"/>
</dbReference>
<dbReference type="MINT" id="P19324"/>
<dbReference type="STRING" id="10090.ENSMUSP00000126390"/>
<dbReference type="BindingDB" id="P19324"/>
<dbReference type="ChEMBL" id="CHEMBL1163113"/>
<dbReference type="MEROPS" id="I04.035"/>
<dbReference type="GlyConnect" id="2705">
    <property type="glycosylation" value="4 N-Linked glycans (1 site)"/>
</dbReference>
<dbReference type="GlyCosmos" id="P19324">
    <property type="glycosylation" value="3 sites, 4 glycans"/>
</dbReference>
<dbReference type="GlyGen" id="P19324">
    <property type="glycosylation" value="4 sites, 6 N-linked glycans (3 sites), 1 O-linked glycan (1 site)"/>
</dbReference>
<dbReference type="iPTMnet" id="P19324"/>
<dbReference type="PhosphoSitePlus" id="P19324"/>
<dbReference type="SwissPalm" id="P19324"/>
<dbReference type="REPRODUCTION-2DPAGE" id="IPI00114733"/>
<dbReference type="jPOST" id="P19324"/>
<dbReference type="PaxDb" id="10090-ENSMUSP00000126390"/>
<dbReference type="PeptideAtlas" id="P19324"/>
<dbReference type="ProteomicsDB" id="255391"/>
<dbReference type="Pumba" id="P19324"/>
<dbReference type="TopDownProteomics" id="P19324"/>
<dbReference type="Antibodypedia" id="3838">
    <property type="antibodies" value="520 antibodies from 36 providers"/>
</dbReference>
<dbReference type="DNASU" id="12406"/>
<dbReference type="Ensembl" id="ENSMUST00000094154.6">
    <property type="protein sequence ID" value="ENSMUSP00000091706.5"/>
    <property type="gene ID" value="ENSMUSG00000070436.13"/>
</dbReference>
<dbReference type="Ensembl" id="ENSMUST00000169437.9">
    <property type="protein sequence ID" value="ENSMUSP00000126390.2"/>
    <property type="gene ID" value="ENSMUSG00000070436.13"/>
</dbReference>
<dbReference type="Ensembl" id="ENSMUST00000207849.2">
    <property type="protein sequence ID" value="ENSMUSP00000147064.2"/>
    <property type="gene ID" value="ENSMUSG00000070436.13"/>
</dbReference>
<dbReference type="Ensembl" id="ENSMUST00000208119.2">
    <property type="protein sequence ID" value="ENSMUSP00000146969.2"/>
    <property type="gene ID" value="ENSMUSG00000070436.13"/>
</dbReference>
<dbReference type="GeneID" id="12406"/>
<dbReference type="KEGG" id="mmu:12406"/>
<dbReference type="UCSC" id="uc009ilj.2">
    <property type="organism name" value="mouse"/>
</dbReference>
<dbReference type="AGR" id="MGI:88283"/>
<dbReference type="CTD" id="871"/>
<dbReference type="MGI" id="MGI:88283">
    <property type="gene designation" value="Serpinh1"/>
</dbReference>
<dbReference type="VEuPathDB" id="HostDB:ENSMUSG00000070436"/>
<dbReference type="eggNOG" id="KOG2392">
    <property type="taxonomic scope" value="Eukaryota"/>
</dbReference>
<dbReference type="GeneTree" id="ENSGT00940000156163"/>
<dbReference type="HOGENOM" id="CLU_023330_2_0_1"/>
<dbReference type="InParanoid" id="P19324"/>
<dbReference type="OMA" id="WDEKFHE"/>
<dbReference type="OrthoDB" id="671595at2759"/>
<dbReference type="PhylomeDB" id="P19324"/>
<dbReference type="TreeFam" id="TF343094"/>
<dbReference type="Reactome" id="R-MMU-1650814">
    <property type="pathway name" value="Collagen biosynthesis and modifying enzymes"/>
</dbReference>
<dbReference type="BioGRID-ORCS" id="12406">
    <property type="hits" value="1 hit in 80 CRISPR screens"/>
</dbReference>
<dbReference type="ChiTaRS" id="Serpinh1">
    <property type="organism name" value="mouse"/>
</dbReference>
<dbReference type="PRO" id="PR:P19324"/>
<dbReference type="Proteomes" id="UP000000589">
    <property type="component" value="Chromosome 7"/>
</dbReference>
<dbReference type="RNAct" id="P19324">
    <property type="molecule type" value="protein"/>
</dbReference>
<dbReference type="Bgee" id="ENSMUSG00000070436">
    <property type="expression patterns" value="Expressed in humerus cartilage element and 264 other cell types or tissues"/>
</dbReference>
<dbReference type="ExpressionAtlas" id="P19324">
    <property type="expression patterns" value="baseline and differential"/>
</dbReference>
<dbReference type="GO" id="GO:0062023">
    <property type="term" value="C:collagen-containing extracellular matrix"/>
    <property type="evidence" value="ECO:0007005"/>
    <property type="project" value="BHF-UCL"/>
</dbReference>
<dbReference type="GO" id="GO:0005737">
    <property type="term" value="C:cytoplasm"/>
    <property type="evidence" value="ECO:0000314"/>
    <property type="project" value="MGI"/>
</dbReference>
<dbReference type="GO" id="GO:0005783">
    <property type="term" value="C:endoplasmic reticulum"/>
    <property type="evidence" value="ECO:0000314"/>
    <property type="project" value="MGI"/>
</dbReference>
<dbReference type="GO" id="GO:0005788">
    <property type="term" value="C:endoplasmic reticulum lumen"/>
    <property type="evidence" value="ECO:0007669"/>
    <property type="project" value="UniProtKB-SubCell"/>
</dbReference>
<dbReference type="GO" id="GO:0005793">
    <property type="term" value="C:endoplasmic reticulum-Golgi intermediate compartment"/>
    <property type="evidence" value="ECO:0007669"/>
    <property type="project" value="Ensembl"/>
</dbReference>
<dbReference type="GO" id="GO:0005615">
    <property type="term" value="C:extracellular space"/>
    <property type="evidence" value="ECO:0007669"/>
    <property type="project" value="InterPro"/>
</dbReference>
<dbReference type="GO" id="GO:0045121">
    <property type="term" value="C:membrane raft"/>
    <property type="evidence" value="ECO:0007669"/>
    <property type="project" value="Ensembl"/>
</dbReference>
<dbReference type="GO" id="GO:0005518">
    <property type="term" value="F:collagen binding"/>
    <property type="evidence" value="ECO:0007669"/>
    <property type="project" value="InterPro"/>
</dbReference>
<dbReference type="GO" id="GO:0004867">
    <property type="term" value="F:serine-type endopeptidase inhibitor activity"/>
    <property type="evidence" value="ECO:0007669"/>
    <property type="project" value="InterPro"/>
</dbReference>
<dbReference type="GO" id="GO:0051082">
    <property type="term" value="F:unfolded protein binding"/>
    <property type="evidence" value="ECO:0000314"/>
    <property type="project" value="MGI"/>
</dbReference>
<dbReference type="GO" id="GO:0003433">
    <property type="term" value="P:chondrocyte development involved in endochondral bone morphogenesis"/>
    <property type="evidence" value="ECO:0000315"/>
    <property type="project" value="MGI"/>
</dbReference>
<dbReference type="GO" id="GO:0032964">
    <property type="term" value="P:collagen biosynthetic process"/>
    <property type="evidence" value="ECO:0000315"/>
    <property type="project" value="MGI"/>
</dbReference>
<dbReference type="GO" id="GO:0030199">
    <property type="term" value="P:collagen fibril organization"/>
    <property type="evidence" value="ECO:0000315"/>
    <property type="project" value="MGI"/>
</dbReference>
<dbReference type="GO" id="GO:0051604">
    <property type="term" value="P:protein maturation"/>
    <property type="evidence" value="ECO:0000315"/>
    <property type="project" value="MGI"/>
</dbReference>
<dbReference type="CDD" id="cd02046">
    <property type="entry name" value="serpinH1_CBP1"/>
    <property type="match status" value="1"/>
</dbReference>
<dbReference type="FunFam" id="2.30.39.10:FF:000072">
    <property type="entry name" value="Serpin peptidase inhibitor, clade H (Heat shock protein 47), member 1, (Collagen binding protein 1)"/>
    <property type="match status" value="1"/>
</dbReference>
<dbReference type="FunFam" id="3.30.497.10:FF:000034">
    <property type="entry name" value="SERPINH1 isoform 13"/>
    <property type="match status" value="1"/>
</dbReference>
<dbReference type="Gene3D" id="2.30.39.10">
    <property type="entry name" value="Alpha-1-antitrypsin, domain 1"/>
    <property type="match status" value="1"/>
</dbReference>
<dbReference type="Gene3D" id="3.30.497.10">
    <property type="entry name" value="Antithrombin, subunit I, domain 2"/>
    <property type="match status" value="1"/>
</dbReference>
<dbReference type="InterPro" id="IPR023795">
    <property type="entry name" value="Serpin_CS"/>
</dbReference>
<dbReference type="InterPro" id="IPR023796">
    <property type="entry name" value="Serpin_dom"/>
</dbReference>
<dbReference type="InterPro" id="IPR000215">
    <property type="entry name" value="Serpin_fam"/>
</dbReference>
<dbReference type="InterPro" id="IPR033830">
    <property type="entry name" value="Serpin_H1_serpin_dom"/>
</dbReference>
<dbReference type="InterPro" id="IPR036186">
    <property type="entry name" value="Serpin_sf"/>
</dbReference>
<dbReference type="InterPro" id="IPR042178">
    <property type="entry name" value="Serpin_sf_1"/>
</dbReference>
<dbReference type="InterPro" id="IPR042185">
    <property type="entry name" value="Serpin_sf_2"/>
</dbReference>
<dbReference type="PANTHER" id="PTHR11461">
    <property type="entry name" value="SERINE PROTEASE INHIBITOR, SERPIN"/>
    <property type="match status" value="1"/>
</dbReference>
<dbReference type="PANTHER" id="PTHR11461:SF27">
    <property type="entry name" value="SERPIN H1"/>
    <property type="match status" value="1"/>
</dbReference>
<dbReference type="Pfam" id="PF00079">
    <property type="entry name" value="Serpin"/>
    <property type="match status" value="1"/>
</dbReference>
<dbReference type="SMART" id="SM00093">
    <property type="entry name" value="SERPIN"/>
    <property type="match status" value="1"/>
</dbReference>
<dbReference type="SUPFAM" id="SSF56574">
    <property type="entry name" value="Serpins"/>
    <property type="match status" value="1"/>
</dbReference>
<dbReference type="PROSITE" id="PS00014">
    <property type="entry name" value="ER_TARGET"/>
    <property type="match status" value="1"/>
</dbReference>
<dbReference type="PROSITE" id="PS00284">
    <property type="entry name" value="SERPIN"/>
    <property type="match status" value="1"/>
</dbReference>
<sequence>MRSLLLGTLCLLAVALAAEVKKPLEAAAPGTAEKLSSKATTLAERSTGLAFSLYQAMAKDQAVENILLSPLVVASSLGLVSLGGKATTASQAKAVLSAEKLRDEEVHTGLGELLRSLSNSTARNVTWKLGSRLYGPSSVSFADDFVRSSKQHYNCEHSKINFRDKRSALQSINEWASQTTDGKLPEVTKDVERTDGALLVNAMFFKPHWDEKFHHKMVDNRGFMVTRSYTVGVTMMHRTGLYNYYDDEKEKLQMVEMPLAHKLSSLIILMPHHVEPLERLEKLLTKEQLKAWMGKMQKKAVAISLPKGVVEVTHDLQKHLAGLGLTEAIDKNKADLSRMSGKKDLYLASVFHATAFEWDTEGNPFDQDIYGREELRSPKLFYADHPFIFLVRDNQSGSLLFIGRLVRPKGDKMRDEL</sequence>
<organism>
    <name type="scientific">Mus musculus</name>
    <name type="common">Mouse</name>
    <dbReference type="NCBI Taxonomy" id="10090"/>
    <lineage>
        <taxon>Eukaryota</taxon>
        <taxon>Metazoa</taxon>
        <taxon>Chordata</taxon>
        <taxon>Craniata</taxon>
        <taxon>Vertebrata</taxon>
        <taxon>Euteleostomi</taxon>
        <taxon>Mammalia</taxon>
        <taxon>Eutheria</taxon>
        <taxon>Euarchontoglires</taxon>
        <taxon>Glires</taxon>
        <taxon>Rodentia</taxon>
        <taxon>Myomorpha</taxon>
        <taxon>Muroidea</taxon>
        <taxon>Muridae</taxon>
        <taxon>Murinae</taxon>
        <taxon>Mus</taxon>
        <taxon>Mus</taxon>
    </lineage>
</organism>
<comment type="function">
    <text>Binds specifically to collagen. Could be involved as a chaperone in the biosynthetic pathway of collagen.</text>
</comment>
<comment type="subcellular location">
    <subcellularLocation>
        <location>Endoplasmic reticulum lumen</location>
    </subcellularLocation>
</comment>
<comment type="induction">
    <text>By heat shock and retinoic acid.</text>
</comment>
<comment type="similarity">
    <text evidence="5">Belongs to the serpin family.</text>
</comment>
<reference key="1">
    <citation type="journal article" date="1992" name="Eur. J. Biochem.">
        <title>Molecular cloning of a mouse 47-kDa heat-shock protein (HSP47), a collagen-binding stress protein, and its expression during the differentiation of F9 teratocarcinoma cells.</title>
        <authorList>
            <person name="Takechi H."/>
            <person name="Hirayoshi K."/>
            <person name="Nakai A."/>
            <person name="Kudo H."/>
            <person name="Saga S."/>
            <person name="Kita T."/>
            <person name="Nagata K."/>
        </authorList>
    </citation>
    <scope>NUCLEOTIDE SEQUENCE [MRNA]</scope>
    <scope>PROTEIN SEQUENCE OF 18-43</scope>
    <source>
        <strain>BALB/cJ</strain>
    </source>
</reference>
<reference key="2">
    <citation type="journal article" date="1990" name="J. Biol. Chem.">
        <title>A retinoic acid-inducible mRNA from F9 teratocarcinoma cells encodes a novel protease inhibitor homologue.</title>
        <authorList>
            <person name="Wang S.-Y."/>
            <person name="Gudas L.J."/>
        </authorList>
    </citation>
    <scope>NUCLEOTIDE SEQUENCE [MRNA]</scope>
    <source>
        <tissue>Teratocarcinoma</tissue>
    </source>
</reference>
<reference key="3">
    <citation type="journal article" date="1991" name="J. Biol. Chem.">
        <authorList>
            <person name="Wang S.-Y."/>
            <person name="Gudas L.J."/>
        </authorList>
    </citation>
    <scope>ERRATUM OF PUBMED:2394749</scope>
</reference>
<reference key="4">
    <citation type="journal article" date="1992" name="J. Biol. Chem.">
        <title>Structure of the gene and its retinoic acid-regulatory region for murine J6 serpin. An F9 teratocarcinoma cell retinoic acid-inducible protein.</title>
        <authorList>
            <person name="Wang S.-Y."/>
        </authorList>
    </citation>
    <scope>NUCLEOTIDE SEQUENCE [GENOMIC DNA]</scope>
</reference>
<reference key="5">
    <citation type="journal article" date="1993" name="Gene">
        <title>Structure of the gene encoding the mouse 47-kDa heat-shock protein (HSP47).</title>
        <authorList>
            <person name="Hosokawa N."/>
            <person name="Takechi H."/>
            <person name="Yokota S.I."/>
            <person name="Hirayoshi K."/>
            <person name="Nagata K."/>
        </authorList>
    </citation>
    <scope>NUCLEOTIDE SEQUENCE [GENOMIC DNA]</scope>
</reference>
<reference key="6">
    <citation type="journal article" date="2005" name="Science">
        <title>The transcriptional landscape of the mammalian genome.</title>
        <authorList>
            <person name="Carninci P."/>
            <person name="Kasukawa T."/>
            <person name="Katayama S."/>
            <person name="Gough J."/>
            <person name="Frith M.C."/>
            <person name="Maeda N."/>
            <person name="Oyama R."/>
            <person name="Ravasi T."/>
            <person name="Lenhard B."/>
            <person name="Wells C."/>
            <person name="Kodzius R."/>
            <person name="Shimokawa K."/>
            <person name="Bajic V.B."/>
            <person name="Brenner S.E."/>
            <person name="Batalov S."/>
            <person name="Forrest A.R."/>
            <person name="Zavolan M."/>
            <person name="Davis M.J."/>
            <person name="Wilming L.G."/>
            <person name="Aidinis V."/>
            <person name="Allen J.E."/>
            <person name="Ambesi-Impiombato A."/>
            <person name="Apweiler R."/>
            <person name="Aturaliya R.N."/>
            <person name="Bailey T.L."/>
            <person name="Bansal M."/>
            <person name="Baxter L."/>
            <person name="Beisel K.W."/>
            <person name="Bersano T."/>
            <person name="Bono H."/>
            <person name="Chalk A.M."/>
            <person name="Chiu K.P."/>
            <person name="Choudhary V."/>
            <person name="Christoffels A."/>
            <person name="Clutterbuck D.R."/>
            <person name="Crowe M.L."/>
            <person name="Dalla E."/>
            <person name="Dalrymple B.P."/>
            <person name="de Bono B."/>
            <person name="Della Gatta G."/>
            <person name="di Bernardo D."/>
            <person name="Down T."/>
            <person name="Engstrom P."/>
            <person name="Fagiolini M."/>
            <person name="Faulkner G."/>
            <person name="Fletcher C.F."/>
            <person name="Fukushima T."/>
            <person name="Furuno M."/>
            <person name="Futaki S."/>
            <person name="Gariboldi M."/>
            <person name="Georgii-Hemming P."/>
            <person name="Gingeras T.R."/>
            <person name="Gojobori T."/>
            <person name="Green R.E."/>
            <person name="Gustincich S."/>
            <person name="Harbers M."/>
            <person name="Hayashi Y."/>
            <person name="Hensch T.K."/>
            <person name="Hirokawa N."/>
            <person name="Hill D."/>
            <person name="Huminiecki L."/>
            <person name="Iacono M."/>
            <person name="Ikeo K."/>
            <person name="Iwama A."/>
            <person name="Ishikawa T."/>
            <person name="Jakt M."/>
            <person name="Kanapin A."/>
            <person name="Katoh M."/>
            <person name="Kawasawa Y."/>
            <person name="Kelso J."/>
            <person name="Kitamura H."/>
            <person name="Kitano H."/>
            <person name="Kollias G."/>
            <person name="Krishnan S.P."/>
            <person name="Kruger A."/>
            <person name="Kummerfeld S.K."/>
            <person name="Kurochkin I.V."/>
            <person name="Lareau L.F."/>
            <person name="Lazarevic D."/>
            <person name="Lipovich L."/>
            <person name="Liu J."/>
            <person name="Liuni S."/>
            <person name="McWilliam S."/>
            <person name="Madan Babu M."/>
            <person name="Madera M."/>
            <person name="Marchionni L."/>
            <person name="Matsuda H."/>
            <person name="Matsuzawa S."/>
            <person name="Miki H."/>
            <person name="Mignone F."/>
            <person name="Miyake S."/>
            <person name="Morris K."/>
            <person name="Mottagui-Tabar S."/>
            <person name="Mulder N."/>
            <person name="Nakano N."/>
            <person name="Nakauchi H."/>
            <person name="Ng P."/>
            <person name="Nilsson R."/>
            <person name="Nishiguchi S."/>
            <person name="Nishikawa S."/>
            <person name="Nori F."/>
            <person name="Ohara O."/>
            <person name="Okazaki Y."/>
            <person name="Orlando V."/>
            <person name="Pang K.C."/>
            <person name="Pavan W.J."/>
            <person name="Pavesi G."/>
            <person name="Pesole G."/>
            <person name="Petrovsky N."/>
            <person name="Piazza S."/>
            <person name="Reed J."/>
            <person name="Reid J.F."/>
            <person name="Ring B.Z."/>
            <person name="Ringwald M."/>
            <person name="Rost B."/>
            <person name="Ruan Y."/>
            <person name="Salzberg S.L."/>
            <person name="Sandelin A."/>
            <person name="Schneider C."/>
            <person name="Schoenbach C."/>
            <person name="Sekiguchi K."/>
            <person name="Semple C.A."/>
            <person name="Seno S."/>
            <person name="Sessa L."/>
            <person name="Sheng Y."/>
            <person name="Shibata Y."/>
            <person name="Shimada H."/>
            <person name="Shimada K."/>
            <person name="Silva D."/>
            <person name="Sinclair B."/>
            <person name="Sperling S."/>
            <person name="Stupka E."/>
            <person name="Sugiura K."/>
            <person name="Sultana R."/>
            <person name="Takenaka Y."/>
            <person name="Taki K."/>
            <person name="Tammoja K."/>
            <person name="Tan S.L."/>
            <person name="Tang S."/>
            <person name="Taylor M.S."/>
            <person name="Tegner J."/>
            <person name="Teichmann S.A."/>
            <person name="Ueda H.R."/>
            <person name="van Nimwegen E."/>
            <person name="Verardo R."/>
            <person name="Wei C.L."/>
            <person name="Yagi K."/>
            <person name="Yamanishi H."/>
            <person name="Zabarovsky E."/>
            <person name="Zhu S."/>
            <person name="Zimmer A."/>
            <person name="Hide W."/>
            <person name="Bult C."/>
            <person name="Grimmond S.M."/>
            <person name="Teasdale R.D."/>
            <person name="Liu E.T."/>
            <person name="Brusic V."/>
            <person name="Quackenbush J."/>
            <person name="Wahlestedt C."/>
            <person name="Mattick J.S."/>
            <person name="Hume D.A."/>
            <person name="Kai C."/>
            <person name="Sasaki D."/>
            <person name="Tomaru Y."/>
            <person name="Fukuda S."/>
            <person name="Kanamori-Katayama M."/>
            <person name="Suzuki M."/>
            <person name="Aoki J."/>
            <person name="Arakawa T."/>
            <person name="Iida J."/>
            <person name="Imamura K."/>
            <person name="Itoh M."/>
            <person name="Kato T."/>
            <person name="Kawaji H."/>
            <person name="Kawagashira N."/>
            <person name="Kawashima T."/>
            <person name="Kojima M."/>
            <person name="Kondo S."/>
            <person name="Konno H."/>
            <person name="Nakano K."/>
            <person name="Ninomiya N."/>
            <person name="Nishio T."/>
            <person name="Okada M."/>
            <person name="Plessy C."/>
            <person name="Shibata K."/>
            <person name="Shiraki T."/>
            <person name="Suzuki S."/>
            <person name="Tagami M."/>
            <person name="Waki K."/>
            <person name="Watahiki A."/>
            <person name="Okamura-Oho Y."/>
            <person name="Suzuki H."/>
            <person name="Kawai J."/>
            <person name="Hayashizaki Y."/>
        </authorList>
    </citation>
    <scope>NUCLEOTIDE SEQUENCE [LARGE SCALE MRNA]</scope>
    <source>
        <strain>C57BL/6J</strain>
        <tissue>Head</tissue>
        <tissue>Heart</tissue>
        <tissue>Skin</tissue>
        <tissue>Stomach</tissue>
        <tissue>Testis</tissue>
    </source>
</reference>
<reference key="7">
    <citation type="journal article" date="2009" name="PLoS Biol.">
        <title>Lineage-specific biology revealed by a finished genome assembly of the mouse.</title>
        <authorList>
            <person name="Church D.M."/>
            <person name="Goodstadt L."/>
            <person name="Hillier L.W."/>
            <person name="Zody M.C."/>
            <person name="Goldstein S."/>
            <person name="She X."/>
            <person name="Bult C.J."/>
            <person name="Agarwala R."/>
            <person name="Cherry J.L."/>
            <person name="DiCuccio M."/>
            <person name="Hlavina W."/>
            <person name="Kapustin Y."/>
            <person name="Meric P."/>
            <person name="Maglott D."/>
            <person name="Birtle Z."/>
            <person name="Marques A.C."/>
            <person name="Graves T."/>
            <person name="Zhou S."/>
            <person name="Teague B."/>
            <person name="Potamousis K."/>
            <person name="Churas C."/>
            <person name="Place M."/>
            <person name="Herschleb J."/>
            <person name="Runnheim R."/>
            <person name="Forrest D."/>
            <person name="Amos-Landgraf J."/>
            <person name="Schwartz D.C."/>
            <person name="Cheng Z."/>
            <person name="Lindblad-Toh K."/>
            <person name="Eichler E.E."/>
            <person name="Ponting C.P."/>
        </authorList>
    </citation>
    <scope>NUCLEOTIDE SEQUENCE [LARGE SCALE GENOMIC DNA]</scope>
    <source>
        <strain>C57BL/6J</strain>
    </source>
</reference>
<reference key="8">
    <citation type="journal article" date="2004" name="Genome Res.">
        <title>The status, quality, and expansion of the NIH full-length cDNA project: the Mammalian Gene Collection (MGC).</title>
        <authorList>
            <consortium name="The MGC Project Team"/>
        </authorList>
    </citation>
    <scope>NUCLEOTIDE SEQUENCE [LARGE SCALE MRNA]</scope>
    <source>
        <strain>C57BL/6J</strain>
        <tissue>Brain</tissue>
    </source>
</reference>
<reference key="9">
    <citation type="journal article" date="2010" name="Cell">
        <title>A tissue-specific atlas of mouse protein phosphorylation and expression.</title>
        <authorList>
            <person name="Huttlin E.L."/>
            <person name="Jedrychowski M.P."/>
            <person name="Elias J.E."/>
            <person name="Goswami T."/>
            <person name="Rad R."/>
            <person name="Beausoleil S.A."/>
            <person name="Villen J."/>
            <person name="Haas W."/>
            <person name="Sowa M.E."/>
            <person name="Gygi S.P."/>
        </authorList>
    </citation>
    <scope>IDENTIFICATION BY MASS SPECTROMETRY [LARGE SCALE ANALYSIS]</scope>
    <source>
        <tissue>Brain</tissue>
        <tissue>Brown adipose tissue</tissue>
        <tissue>Heart</tissue>
        <tissue>Kidney</tissue>
        <tissue>Liver</tissue>
        <tissue>Lung</tissue>
        <tissue>Pancreas</tissue>
        <tissue>Spleen</tissue>
        <tissue>Testis</tissue>
    </source>
</reference>
<reference key="10">
    <citation type="journal article" date="2013" name="Mol. Cell">
        <title>SIRT5-mediated lysine desuccinylation impacts diverse metabolic pathways.</title>
        <authorList>
            <person name="Park J."/>
            <person name="Chen Y."/>
            <person name="Tishkoff D.X."/>
            <person name="Peng C."/>
            <person name="Tan M."/>
            <person name="Dai L."/>
            <person name="Xie Z."/>
            <person name="Zhang Y."/>
            <person name="Zwaans B.M."/>
            <person name="Skinner M.E."/>
            <person name="Lombard D.B."/>
            <person name="Zhao Y."/>
        </authorList>
    </citation>
    <scope>ACETYLATION [LARGE SCALE ANALYSIS] AT LYS-206 AND LYS-318</scope>
    <scope>SUCCINYLATION [LARGE SCALE ANALYSIS] AT LYS-93 AND LYS-295</scope>
    <scope>IDENTIFICATION BY MASS SPECTROMETRY [LARGE SCALE ANALYSIS]</scope>
    <source>
        <tissue>Embryonic fibroblast</tissue>
    </source>
</reference>
<protein>
    <recommendedName>
        <fullName>Serpin H1</fullName>
    </recommendedName>
    <alternativeName>
        <fullName>47 kDa heat shock protein</fullName>
    </alternativeName>
    <alternativeName>
        <fullName>Collagen-binding protein</fullName>
        <shortName>Colligin</shortName>
    </alternativeName>
    <alternativeName>
        <fullName>Serine protease inhibitor J6</fullName>
    </alternativeName>
</protein>
<feature type="signal peptide" evidence="4">
    <location>
        <begin position="1"/>
        <end position="17"/>
    </location>
</feature>
<feature type="chain" id="PRO_0000032517" description="Serpin H1">
    <location>
        <begin position="18"/>
        <end position="417"/>
    </location>
</feature>
<feature type="short sequence motif" description="Prevents secretion from ER" evidence="5">
    <location>
        <begin position="414"/>
        <end position="417"/>
    </location>
</feature>
<feature type="site" description="Reactive bond homolog" evidence="1">
    <location>
        <begin position="376"/>
        <end position="377"/>
    </location>
</feature>
<feature type="modified residue" description="N6-succinyllysine" evidence="6">
    <location>
        <position position="93"/>
    </location>
</feature>
<feature type="modified residue" description="Phosphoserine" evidence="2">
    <location>
        <position position="140"/>
    </location>
</feature>
<feature type="modified residue" description="N6-acetyllysine" evidence="6">
    <location>
        <position position="206"/>
    </location>
</feature>
<feature type="modified residue" description="N6-succinyllysine" evidence="6">
    <location>
        <position position="295"/>
    </location>
</feature>
<feature type="modified residue" description="N6-acetyllysine" evidence="6">
    <location>
        <position position="318"/>
    </location>
</feature>
<feature type="glycosylation site" description="N-linked (GlcNAc...) asparagine" evidence="3">
    <location>
        <position position="119"/>
    </location>
</feature>
<feature type="glycosylation site" description="N-linked (GlcNAc...) asparagine" evidence="3">
    <location>
        <position position="124"/>
    </location>
</feature>
<feature type="glycosylation site" description="N-linked (GlcNAc...) asparagine" evidence="3">
    <location>
        <position position="394"/>
    </location>
</feature>
<feature type="sequence conflict" description="In Ref. 2; AAA03200." evidence="5" ref="2">
    <original>A</original>
    <variation>P</variation>
    <location>
        <position position="176"/>
    </location>
</feature>
<feature type="sequence conflict" description="In Ref. 1; CAA43091 and 2; AAA03200." evidence="5" ref="1 2">
    <original>K</original>
    <variation>R</variation>
    <location>
        <position position="212"/>
    </location>
</feature>
<feature type="sequence conflict" description="In Ref. 1; CAA43091 and 2; AAA03200." evidence="5" ref="1 2">
    <original>K</original>
    <variation>R</variation>
    <location>
        <position position="216"/>
    </location>
</feature>
<feature type="sequence conflict" description="In Ref. 2; AAA03200." evidence="5" ref="2">
    <original>MP</original>
    <variation>IA</variation>
    <location>
        <begin position="270"/>
        <end position="271"/>
    </location>
</feature>
<feature type="sequence conflict" description="In Ref. 2; AAA03200." evidence="5" ref="2">
    <original>L</original>
    <variation>S</variation>
    <location>
        <position position="277"/>
    </location>
</feature>
<gene>
    <name type="primary">Serpinh1</name>
    <name type="synonym">Cbp1</name>
    <name type="synonym">Hsp47</name>
</gene>
<accession>P19324</accession>
<accession>Q5U4D0</accession>
<proteinExistence type="evidence at protein level"/>
<name>SERPH_MOUSE</name>